<organism>
    <name type="scientific">Yersinia pseudotuberculosis serotype O:1b (strain IP 31758)</name>
    <dbReference type="NCBI Taxonomy" id="349747"/>
    <lineage>
        <taxon>Bacteria</taxon>
        <taxon>Pseudomonadati</taxon>
        <taxon>Pseudomonadota</taxon>
        <taxon>Gammaproteobacteria</taxon>
        <taxon>Enterobacterales</taxon>
        <taxon>Yersiniaceae</taxon>
        <taxon>Yersinia</taxon>
    </lineage>
</organism>
<accession>A7FFL7</accession>
<reference key="1">
    <citation type="journal article" date="2007" name="PLoS Genet.">
        <title>The complete genome sequence of Yersinia pseudotuberculosis IP31758, the causative agent of Far East scarlet-like fever.</title>
        <authorList>
            <person name="Eppinger M."/>
            <person name="Rosovitz M.J."/>
            <person name="Fricke W.F."/>
            <person name="Rasko D.A."/>
            <person name="Kokorina G."/>
            <person name="Fayolle C."/>
            <person name="Lindler L.E."/>
            <person name="Carniel E."/>
            <person name="Ravel J."/>
        </authorList>
    </citation>
    <scope>NUCLEOTIDE SEQUENCE [LARGE SCALE GENOMIC DNA]</scope>
    <source>
        <strain>IP 31758</strain>
    </source>
</reference>
<comment type="function">
    <text evidence="1">Probably involved in ribonucleotide reductase function.</text>
</comment>
<comment type="similarity">
    <text evidence="1">Belongs to the NrdI family.</text>
</comment>
<dbReference type="EMBL" id="CP000720">
    <property type="protein sequence ID" value="ABS48650.1"/>
    <property type="molecule type" value="Genomic_DNA"/>
</dbReference>
<dbReference type="RefSeq" id="WP_002215935.1">
    <property type="nucleotide sequence ID" value="NC_009708.1"/>
</dbReference>
<dbReference type="SMR" id="A7FFL7"/>
<dbReference type="GeneID" id="57976042"/>
<dbReference type="KEGG" id="ypi:YpsIP31758_1064"/>
<dbReference type="HOGENOM" id="CLU_114845_0_0_6"/>
<dbReference type="Proteomes" id="UP000002412">
    <property type="component" value="Chromosome"/>
</dbReference>
<dbReference type="GO" id="GO:0010181">
    <property type="term" value="F:FMN binding"/>
    <property type="evidence" value="ECO:0007669"/>
    <property type="project" value="InterPro"/>
</dbReference>
<dbReference type="GO" id="GO:0036211">
    <property type="term" value="P:protein modification process"/>
    <property type="evidence" value="ECO:0007669"/>
    <property type="project" value="InterPro"/>
</dbReference>
<dbReference type="FunFam" id="3.40.50.360:FF:000005">
    <property type="entry name" value="Protein NrdI"/>
    <property type="match status" value="1"/>
</dbReference>
<dbReference type="Gene3D" id="3.40.50.360">
    <property type="match status" value="1"/>
</dbReference>
<dbReference type="HAMAP" id="MF_00128">
    <property type="entry name" value="NrdI"/>
    <property type="match status" value="1"/>
</dbReference>
<dbReference type="InterPro" id="IPR029039">
    <property type="entry name" value="Flavoprotein-like_sf"/>
</dbReference>
<dbReference type="InterPro" id="IPR020852">
    <property type="entry name" value="RNR_Ib_NrdI_bac"/>
</dbReference>
<dbReference type="InterPro" id="IPR004465">
    <property type="entry name" value="RNR_NrdI"/>
</dbReference>
<dbReference type="NCBIfam" id="TIGR00333">
    <property type="entry name" value="nrdI"/>
    <property type="match status" value="1"/>
</dbReference>
<dbReference type="PANTHER" id="PTHR37297">
    <property type="entry name" value="PROTEIN NRDI"/>
    <property type="match status" value="1"/>
</dbReference>
<dbReference type="PANTHER" id="PTHR37297:SF1">
    <property type="entry name" value="PROTEIN NRDI"/>
    <property type="match status" value="1"/>
</dbReference>
<dbReference type="Pfam" id="PF07972">
    <property type="entry name" value="Flavodoxin_NdrI"/>
    <property type="match status" value="1"/>
</dbReference>
<dbReference type="PIRSF" id="PIRSF005087">
    <property type="entry name" value="NrdI"/>
    <property type="match status" value="1"/>
</dbReference>
<dbReference type="SUPFAM" id="SSF52218">
    <property type="entry name" value="Flavoproteins"/>
    <property type="match status" value="1"/>
</dbReference>
<gene>
    <name evidence="1" type="primary">nrdI</name>
    <name type="ordered locus">YpsIP31758_1064</name>
</gene>
<evidence type="ECO:0000255" key="1">
    <source>
        <dbReference type="HAMAP-Rule" id="MF_00128"/>
    </source>
</evidence>
<sequence>MNPLVYFSSSSENSHRFVEKLQLPAIRIPIAGAREKLRVEQPYILLVPSYGGGSPVGAVPIQVIRFLNDVHNRSLIRGVIAAGNTNFGDAYCLAGDIISHKCQVPYLYRFELLGTAEDVANVRKGVTEFWQRQN</sequence>
<name>NRDI_YERP3</name>
<protein>
    <recommendedName>
        <fullName evidence="1">Protein NrdI</fullName>
    </recommendedName>
</protein>
<feature type="chain" id="PRO_1000057838" description="Protein NrdI">
    <location>
        <begin position="1"/>
        <end position="134"/>
    </location>
</feature>
<proteinExistence type="inferred from homology"/>